<evidence type="ECO:0000256" key="1">
    <source>
        <dbReference type="SAM" id="MobiDB-lite"/>
    </source>
</evidence>
<organism>
    <name type="scientific">Homo sapiens</name>
    <name type="common">Human</name>
    <dbReference type="NCBI Taxonomy" id="9606"/>
    <lineage>
        <taxon>Eukaryota</taxon>
        <taxon>Metazoa</taxon>
        <taxon>Chordata</taxon>
        <taxon>Craniata</taxon>
        <taxon>Vertebrata</taxon>
        <taxon>Euteleostomi</taxon>
        <taxon>Mammalia</taxon>
        <taxon>Eutheria</taxon>
        <taxon>Euarchontoglires</taxon>
        <taxon>Primates</taxon>
        <taxon>Haplorrhini</taxon>
        <taxon>Catarrhini</taxon>
        <taxon>Hominidae</taxon>
        <taxon>Homo</taxon>
    </lineage>
</organism>
<dbReference type="EMBL" id="AK056221">
    <property type="protein sequence ID" value="BAB71123.1"/>
    <property type="molecule type" value="mRNA"/>
</dbReference>
<dbReference type="EMBL" id="BC022381">
    <property type="protein sequence ID" value="AAH22381.1"/>
    <property type="molecule type" value="mRNA"/>
</dbReference>
<dbReference type="RefSeq" id="NP_694572.1">
    <property type="nucleotide sequence ID" value="NM_153027.1"/>
</dbReference>
<dbReference type="BioGRID" id="127464">
    <property type="interactions" value="16"/>
</dbReference>
<dbReference type="IntAct" id="Q96MZ4">
    <property type="interactions" value="15"/>
</dbReference>
<dbReference type="STRING" id="9606.ENSP00000427428"/>
<dbReference type="GlyGen" id="Q96MZ4">
    <property type="glycosylation" value="2 sites, 1 O-linked glycan (1 site)"/>
</dbReference>
<dbReference type="iPTMnet" id="Q96MZ4"/>
<dbReference type="PhosphoSitePlus" id="Q96MZ4"/>
<dbReference type="BioMuta" id="FAM218A"/>
<dbReference type="PaxDb" id="9606-ENSP00000427428"/>
<dbReference type="PeptideAtlas" id="Q96MZ4"/>
<dbReference type="ProteomicsDB" id="77435"/>
<dbReference type="DNASU" id="152756"/>
<dbReference type="UCSC" id="uc003iqx.2">
    <property type="organism name" value="human"/>
</dbReference>
<dbReference type="AGR" id="HGNC:26466"/>
<dbReference type="GeneCards" id="FAM218A"/>
<dbReference type="HGNC" id="HGNC:26466">
    <property type="gene designation" value="FAM218A"/>
</dbReference>
<dbReference type="neXtProt" id="NX_Q96MZ4"/>
<dbReference type="PharmGKB" id="PA162379827"/>
<dbReference type="HOGENOM" id="CLU_1677266_0_0_1"/>
<dbReference type="InParanoid" id="Q96MZ4"/>
<dbReference type="PAN-GO" id="Q96MZ4">
    <property type="GO annotations" value="0 GO annotations based on evolutionary models"/>
</dbReference>
<dbReference type="PathwayCommons" id="Q96MZ4"/>
<dbReference type="SignaLink" id="Q96MZ4"/>
<dbReference type="BioGRID-ORCS" id="152756">
    <property type="hits" value="12 hits in 1142 CRISPR screens"/>
</dbReference>
<dbReference type="ChiTaRS" id="FAM218A">
    <property type="organism name" value="human"/>
</dbReference>
<dbReference type="GenomeRNAi" id="152756"/>
<dbReference type="Pharos" id="Q96MZ4">
    <property type="development level" value="Tdark"/>
</dbReference>
<dbReference type="PRO" id="PR:Q96MZ4"/>
<dbReference type="Proteomes" id="UP000005640">
    <property type="component" value="Chromosome 4"/>
</dbReference>
<dbReference type="RNAct" id="Q96MZ4">
    <property type="molecule type" value="protein"/>
</dbReference>
<feature type="chain" id="PRO_0000340724" description="Protein FAM218A">
    <location>
        <begin position="1"/>
        <end position="157"/>
    </location>
</feature>
<feature type="region of interest" description="Disordered" evidence="1">
    <location>
        <begin position="104"/>
        <end position="127"/>
    </location>
</feature>
<feature type="sequence variant" id="VAR_044025" description="In dbSNP:rs3733418.">
    <original>H</original>
    <variation>R</variation>
    <location>
        <position position="54"/>
    </location>
</feature>
<sequence length="157" mass="17021">MEGCAVRRGSCPLLPGPSAWRASPAGWAGRAKLRSWCRASGLPNRPYTLTGGRHGSVSLLRHPGTTTFVQQRSLHQSWEKRIVFSACPVSRSWCPERNFSGSIPAVTPPKLPGHSKSEGPPGKVRKRTTIRSQPLFVTRTRGFGSAVGWLPLGSPVL</sequence>
<reference key="1">
    <citation type="journal article" date="2004" name="Nat. Genet.">
        <title>Complete sequencing and characterization of 21,243 full-length human cDNAs.</title>
        <authorList>
            <person name="Ota T."/>
            <person name="Suzuki Y."/>
            <person name="Nishikawa T."/>
            <person name="Otsuki T."/>
            <person name="Sugiyama T."/>
            <person name="Irie R."/>
            <person name="Wakamatsu A."/>
            <person name="Hayashi K."/>
            <person name="Sato H."/>
            <person name="Nagai K."/>
            <person name="Kimura K."/>
            <person name="Makita H."/>
            <person name="Sekine M."/>
            <person name="Obayashi M."/>
            <person name="Nishi T."/>
            <person name="Shibahara T."/>
            <person name="Tanaka T."/>
            <person name="Ishii S."/>
            <person name="Yamamoto J."/>
            <person name="Saito K."/>
            <person name="Kawai Y."/>
            <person name="Isono Y."/>
            <person name="Nakamura Y."/>
            <person name="Nagahari K."/>
            <person name="Murakami K."/>
            <person name="Yasuda T."/>
            <person name="Iwayanagi T."/>
            <person name="Wagatsuma M."/>
            <person name="Shiratori A."/>
            <person name="Sudo H."/>
            <person name="Hosoiri T."/>
            <person name="Kaku Y."/>
            <person name="Kodaira H."/>
            <person name="Kondo H."/>
            <person name="Sugawara M."/>
            <person name="Takahashi M."/>
            <person name="Kanda K."/>
            <person name="Yokoi T."/>
            <person name="Furuya T."/>
            <person name="Kikkawa E."/>
            <person name="Omura Y."/>
            <person name="Abe K."/>
            <person name="Kamihara K."/>
            <person name="Katsuta N."/>
            <person name="Sato K."/>
            <person name="Tanikawa M."/>
            <person name="Yamazaki M."/>
            <person name="Ninomiya K."/>
            <person name="Ishibashi T."/>
            <person name="Yamashita H."/>
            <person name="Murakawa K."/>
            <person name="Fujimori K."/>
            <person name="Tanai H."/>
            <person name="Kimata M."/>
            <person name="Watanabe M."/>
            <person name="Hiraoka S."/>
            <person name="Chiba Y."/>
            <person name="Ishida S."/>
            <person name="Ono Y."/>
            <person name="Takiguchi S."/>
            <person name="Watanabe S."/>
            <person name="Yosida M."/>
            <person name="Hotuta T."/>
            <person name="Kusano J."/>
            <person name="Kanehori K."/>
            <person name="Takahashi-Fujii A."/>
            <person name="Hara H."/>
            <person name="Tanase T.-O."/>
            <person name="Nomura Y."/>
            <person name="Togiya S."/>
            <person name="Komai F."/>
            <person name="Hara R."/>
            <person name="Takeuchi K."/>
            <person name="Arita M."/>
            <person name="Imose N."/>
            <person name="Musashino K."/>
            <person name="Yuuki H."/>
            <person name="Oshima A."/>
            <person name="Sasaki N."/>
            <person name="Aotsuka S."/>
            <person name="Yoshikawa Y."/>
            <person name="Matsunawa H."/>
            <person name="Ichihara T."/>
            <person name="Shiohata N."/>
            <person name="Sano S."/>
            <person name="Moriya S."/>
            <person name="Momiyama H."/>
            <person name="Satoh N."/>
            <person name="Takami S."/>
            <person name="Terashima Y."/>
            <person name="Suzuki O."/>
            <person name="Nakagawa S."/>
            <person name="Senoh A."/>
            <person name="Mizoguchi H."/>
            <person name="Goto Y."/>
            <person name="Shimizu F."/>
            <person name="Wakebe H."/>
            <person name="Hishigaki H."/>
            <person name="Watanabe T."/>
            <person name="Sugiyama A."/>
            <person name="Takemoto M."/>
            <person name="Kawakami B."/>
            <person name="Yamazaki M."/>
            <person name="Watanabe K."/>
            <person name="Kumagai A."/>
            <person name="Itakura S."/>
            <person name="Fukuzumi Y."/>
            <person name="Fujimori Y."/>
            <person name="Komiyama M."/>
            <person name="Tashiro H."/>
            <person name="Tanigami A."/>
            <person name="Fujiwara T."/>
            <person name="Ono T."/>
            <person name="Yamada K."/>
            <person name="Fujii Y."/>
            <person name="Ozaki K."/>
            <person name="Hirao M."/>
            <person name="Ohmori Y."/>
            <person name="Kawabata A."/>
            <person name="Hikiji T."/>
            <person name="Kobatake N."/>
            <person name="Inagaki H."/>
            <person name="Ikema Y."/>
            <person name="Okamoto S."/>
            <person name="Okitani R."/>
            <person name="Kawakami T."/>
            <person name="Noguchi S."/>
            <person name="Itoh T."/>
            <person name="Shigeta K."/>
            <person name="Senba T."/>
            <person name="Matsumura K."/>
            <person name="Nakajima Y."/>
            <person name="Mizuno T."/>
            <person name="Morinaga M."/>
            <person name="Sasaki M."/>
            <person name="Togashi T."/>
            <person name="Oyama M."/>
            <person name="Hata H."/>
            <person name="Watanabe M."/>
            <person name="Komatsu T."/>
            <person name="Mizushima-Sugano J."/>
            <person name="Satoh T."/>
            <person name="Shirai Y."/>
            <person name="Takahashi Y."/>
            <person name="Nakagawa K."/>
            <person name="Okumura K."/>
            <person name="Nagase T."/>
            <person name="Nomura N."/>
            <person name="Kikuchi H."/>
            <person name="Masuho Y."/>
            <person name="Yamashita R."/>
            <person name="Nakai K."/>
            <person name="Yada T."/>
            <person name="Nakamura Y."/>
            <person name="Ohara O."/>
            <person name="Isogai T."/>
            <person name="Sugano S."/>
        </authorList>
    </citation>
    <scope>NUCLEOTIDE SEQUENCE [LARGE SCALE MRNA]</scope>
    <source>
        <tissue>Teratocarcinoma</tissue>
    </source>
</reference>
<reference key="2">
    <citation type="journal article" date="2004" name="Genome Res.">
        <title>The status, quality, and expansion of the NIH full-length cDNA project: the Mammalian Gene Collection (MGC).</title>
        <authorList>
            <consortium name="The MGC Project Team"/>
        </authorList>
    </citation>
    <scope>NUCLEOTIDE SEQUENCE [LARGE SCALE MRNA]</scope>
    <source>
        <tissue>Prostate</tissue>
    </source>
</reference>
<protein>
    <recommendedName>
        <fullName>Protein FAM218A</fullName>
    </recommendedName>
</protein>
<name>F218A_HUMAN</name>
<proteinExistence type="evidence at protein level"/>
<keyword id="KW-1185">Reference proteome</keyword>
<gene>
    <name type="primary">FAM218A</name>
    <name type="synonym">C4orf39</name>
</gene>
<comment type="interaction">
    <interactant intactId="EBI-10291578">
        <id>Q96MZ4</id>
    </interactant>
    <interactant intactId="EBI-7062247">
        <id>Q9UHD4</id>
        <label>CIDEB</label>
    </interactant>
    <organismsDiffer>false</organismsDiffer>
    <experiments>3</experiments>
</comment>
<comment type="interaction">
    <interactant intactId="EBI-10291578">
        <id>Q96MZ4</id>
    </interactant>
    <interactant intactId="EBI-348380">
        <id>P25788</id>
        <label>PSMA3</label>
    </interactant>
    <organismsDiffer>false</organismsDiffer>
    <experiments>3</experiments>
</comment>
<accession>Q96MZ4</accession>